<feature type="chain" id="PRO_0000074686" description="Aerobic respiration control sensor protein ArcB homolog">
    <location>
        <begin position="1"/>
        <end position="325"/>
    </location>
</feature>
<feature type="topological domain" description="Cytoplasmic" evidence="2">
    <location>
        <begin position="1"/>
        <end position="26"/>
    </location>
</feature>
<feature type="transmembrane region" description="Helical" evidence="2">
    <location>
        <begin position="27"/>
        <end position="47"/>
    </location>
</feature>
<feature type="topological domain" description="Periplasmic" evidence="2">
    <location>
        <begin position="48"/>
        <end position="57"/>
    </location>
</feature>
<feature type="transmembrane region" description="Helical" evidence="2">
    <location>
        <begin position="58"/>
        <end position="78"/>
    </location>
</feature>
<feature type="topological domain" description="Cytoplasmic" evidence="2">
    <location>
        <begin position="79"/>
        <end position="325"/>
    </location>
</feature>
<feature type="domain" description="Histidine kinase" evidence="3">
    <location>
        <begin position="128"/>
        <end position="325"/>
    </location>
</feature>
<feature type="modified residue" description="Phosphohistidine; by autocatalysis" evidence="3">
    <location>
        <position position="131"/>
    </location>
</feature>
<name>ARCB_HAEIN</name>
<accession>P44578</accession>
<sequence length="325" mass="37249">MKNFKYFAQSYVDWVIRLGRLRFSLLGVMILAVLALCTQILFSLFIVHQISWVDIFRSVTFGLLTAPFVIYFFTLLVEKLEHSRLDLSSSVNRLENEVAERIAAQKKLSQALEKLEKNSRDKSTLLATISHEFRTPLNGIVGLSQILLDDELDDLQRNYLKTINISAVSLGYIFSDIIDLEKIDASRIELNRQPTDFPALLNDIYNFASFLAKEKNLIFSLELEPNLPNWLNLDRVRLSQILWNLISNAVKFTDQGNIILKIMRNQDCYHFIVKDTGMGISPEEQKHIFEMYYQVKESRQQSAGSGIGLAISKNLAQLMGRGFNS</sequence>
<proteinExistence type="inferred from homology"/>
<evidence type="ECO:0000250" key="1"/>
<evidence type="ECO:0000255" key="2"/>
<evidence type="ECO:0000255" key="3">
    <source>
        <dbReference type="PROSITE-ProRule" id="PRU00107"/>
    </source>
</evidence>
<evidence type="ECO:0000305" key="4"/>
<comment type="function">
    <text evidence="1">Member of the two-component regulatory system ArcB/ArcA. Activates ArcA by phosphorylation (By similarity).</text>
</comment>
<comment type="catalytic activity">
    <reaction>
        <text>ATP + protein L-histidine = ADP + protein N-phospho-L-histidine.</text>
        <dbReference type="EC" id="2.7.13.3"/>
    </reaction>
</comment>
<comment type="subcellular location">
    <subcellularLocation>
        <location evidence="4">Cell inner membrane</location>
        <topology evidence="4">Multi-pass membrane protein</topology>
    </subcellularLocation>
</comment>
<protein>
    <recommendedName>
        <fullName>Aerobic respiration control sensor protein ArcB homolog</fullName>
        <ecNumber>2.7.13.3</ecNumber>
    </recommendedName>
</protein>
<reference key="1">
    <citation type="journal article" date="1995" name="Science">
        <title>Whole-genome random sequencing and assembly of Haemophilus influenzae Rd.</title>
        <authorList>
            <person name="Fleischmann R.D."/>
            <person name="Adams M.D."/>
            <person name="White O."/>
            <person name="Clayton R.A."/>
            <person name="Kirkness E.F."/>
            <person name="Kerlavage A.R."/>
            <person name="Bult C.J."/>
            <person name="Tomb J.-F."/>
            <person name="Dougherty B.A."/>
            <person name="Merrick J.M."/>
            <person name="McKenney K."/>
            <person name="Sutton G.G."/>
            <person name="FitzHugh W."/>
            <person name="Fields C.A."/>
            <person name="Gocayne J.D."/>
            <person name="Scott J.D."/>
            <person name="Shirley R."/>
            <person name="Liu L.-I."/>
            <person name="Glodek A."/>
            <person name="Kelley J.M."/>
            <person name="Weidman J.F."/>
            <person name="Phillips C.A."/>
            <person name="Spriggs T."/>
            <person name="Hedblom E."/>
            <person name="Cotton M.D."/>
            <person name="Utterback T.R."/>
            <person name="Hanna M.C."/>
            <person name="Nguyen D.T."/>
            <person name="Saudek D.M."/>
            <person name="Brandon R.C."/>
            <person name="Fine L.D."/>
            <person name="Fritchman J.L."/>
            <person name="Fuhrmann J.L."/>
            <person name="Geoghagen N.S.M."/>
            <person name="Gnehm C.L."/>
            <person name="McDonald L.A."/>
            <person name="Small K.V."/>
            <person name="Fraser C.M."/>
            <person name="Smith H.O."/>
            <person name="Venter J.C."/>
        </authorList>
    </citation>
    <scope>NUCLEOTIDE SEQUENCE [LARGE SCALE GENOMIC DNA]</scope>
    <source>
        <strain>ATCC 51907 / DSM 11121 / KW20 / Rd</strain>
    </source>
</reference>
<keyword id="KW-0067">ATP-binding</keyword>
<keyword id="KW-0997">Cell inner membrane</keyword>
<keyword id="KW-1003">Cell membrane</keyword>
<keyword id="KW-0418">Kinase</keyword>
<keyword id="KW-0472">Membrane</keyword>
<keyword id="KW-0547">Nucleotide-binding</keyword>
<keyword id="KW-0597">Phosphoprotein</keyword>
<keyword id="KW-1185">Reference proteome</keyword>
<keyword id="KW-0804">Transcription</keyword>
<keyword id="KW-0805">Transcription regulation</keyword>
<keyword id="KW-0808">Transferase</keyword>
<keyword id="KW-0812">Transmembrane</keyword>
<keyword id="KW-1133">Transmembrane helix</keyword>
<keyword id="KW-0902">Two-component regulatory system</keyword>
<dbReference type="EC" id="2.7.13.3"/>
<dbReference type="EMBL" id="L42023">
    <property type="status" value="NOT_ANNOTATED_CDS"/>
    <property type="molecule type" value="Genomic_DNA"/>
</dbReference>
<dbReference type="PIR" id="G64055">
    <property type="entry name" value="G64055"/>
</dbReference>
<dbReference type="SMR" id="P44578"/>
<dbReference type="PhylomeDB" id="P44578"/>
<dbReference type="BRENDA" id="2.7.13.3">
    <property type="organism ID" value="2529"/>
</dbReference>
<dbReference type="Proteomes" id="UP000000579">
    <property type="component" value="Chromosome"/>
</dbReference>
<dbReference type="GO" id="GO:0005886">
    <property type="term" value="C:plasma membrane"/>
    <property type="evidence" value="ECO:0007669"/>
    <property type="project" value="UniProtKB-SubCell"/>
</dbReference>
<dbReference type="GO" id="GO:0005524">
    <property type="term" value="F:ATP binding"/>
    <property type="evidence" value="ECO:0007669"/>
    <property type="project" value="UniProtKB-KW"/>
</dbReference>
<dbReference type="GO" id="GO:0000155">
    <property type="term" value="F:phosphorelay sensor kinase activity"/>
    <property type="evidence" value="ECO:0007669"/>
    <property type="project" value="InterPro"/>
</dbReference>
<dbReference type="CDD" id="cd00082">
    <property type="entry name" value="HisKA"/>
    <property type="match status" value="1"/>
</dbReference>
<dbReference type="Gene3D" id="1.10.287.130">
    <property type="match status" value="1"/>
</dbReference>
<dbReference type="Gene3D" id="1.10.287.970">
    <property type="entry name" value="His Kinase A (phosphoacceptor) domain"/>
    <property type="match status" value="1"/>
</dbReference>
<dbReference type="Gene3D" id="3.30.565.10">
    <property type="entry name" value="Histidine kinase-like ATPase, C-terminal domain"/>
    <property type="match status" value="1"/>
</dbReference>
<dbReference type="InterPro" id="IPR027460">
    <property type="entry name" value="ArcB_TM_sf"/>
</dbReference>
<dbReference type="InterPro" id="IPR036890">
    <property type="entry name" value="HATPase_C_sf"/>
</dbReference>
<dbReference type="InterPro" id="IPR005467">
    <property type="entry name" value="His_kinase_dom"/>
</dbReference>
<dbReference type="InterPro" id="IPR003661">
    <property type="entry name" value="HisK_dim/P_dom"/>
</dbReference>
<dbReference type="InterPro" id="IPR036097">
    <property type="entry name" value="HisK_dim/P_sf"/>
</dbReference>
<dbReference type="InterPro" id="IPR040642">
    <property type="entry name" value="HKR_ArcB_TM"/>
</dbReference>
<dbReference type="InterPro" id="IPR050736">
    <property type="entry name" value="Sensor_HK_Regulatory"/>
</dbReference>
<dbReference type="InterPro" id="IPR004358">
    <property type="entry name" value="Sig_transdc_His_kin-like_C"/>
</dbReference>
<dbReference type="PANTHER" id="PTHR43711:SF1">
    <property type="entry name" value="HISTIDINE KINASE 1"/>
    <property type="match status" value="1"/>
</dbReference>
<dbReference type="PANTHER" id="PTHR43711">
    <property type="entry name" value="TWO-COMPONENT HISTIDINE KINASE"/>
    <property type="match status" value="1"/>
</dbReference>
<dbReference type="Pfam" id="PF02518">
    <property type="entry name" value="HATPase_c"/>
    <property type="match status" value="1"/>
</dbReference>
<dbReference type="Pfam" id="PF00512">
    <property type="entry name" value="HisKA"/>
    <property type="match status" value="1"/>
</dbReference>
<dbReference type="Pfam" id="PF18415">
    <property type="entry name" value="HKR_ArcB_TM"/>
    <property type="match status" value="1"/>
</dbReference>
<dbReference type="PRINTS" id="PR00344">
    <property type="entry name" value="BCTRLSENSOR"/>
</dbReference>
<dbReference type="SMART" id="SM00387">
    <property type="entry name" value="HATPase_c"/>
    <property type="match status" value="1"/>
</dbReference>
<dbReference type="SMART" id="SM00388">
    <property type="entry name" value="HisKA"/>
    <property type="match status" value="1"/>
</dbReference>
<dbReference type="SUPFAM" id="SSF55874">
    <property type="entry name" value="ATPase domain of HSP90 chaperone/DNA topoisomerase II/histidine kinase"/>
    <property type="match status" value="1"/>
</dbReference>
<dbReference type="SUPFAM" id="SSF47384">
    <property type="entry name" value="Homodimeric domain of signal transducing histidine kinase"/>
    <property type="match status" value="1"/>
</dbReference>
<dbReference type="PROSITE" id="PS50109">
    <property type="entry name" value="HIS_KIN"/>
    <property type="match status" value="1"/>
</dbReference>
<organism>
    <name type="scientific">Haemophilus influenzae (strain ATCC 51907 / DSM 11121 / KW20 / Rd)</name>
    <dbReference type="NCBI Taxonomy" id="71421"/>
    <lineage>
        <taxon>Bacteria</taxon>
        <taxon>Pseudomonadati</taxon>
        <taxon>Pseudomonadota</taxon>
        <taxon>Gammaproteobacteria</taxon>
        <taxon>Pasteurellales</taxon>
        <taxon>Pasteurellaceae</taxon>
        <taxon>Haemophilus</taxon>
    </lineage>
</organism>
<gene>
    <name type="primary">arcB</name>
    <name type="ordered locus">HI_0220</name>
</gene>